<protein>
    <recommendedName>
        <fullName>Uncharacterized protein C3orf38 homolog</fullName>
    </recommendedName>
</protein>
<accession>Q3TTL0</accession>
<accession>A9C482</accession>
<accession>Q8VE03</accession>
<organism>
    <name type="scientific">Mus musculus</name>
    <name type="common">Mouse</name>
    <dbReference type="NCBI Taxonomy" id="10090"/>
    <lineage>
        <taxon>Eukaryota</taxon>
        <taxon>Metazoa</taxon>
        <taxon>Chordata</taxon>
        <taxon>Craniata</taxon>
        <taxon>Vertebrata</taxon>
        <taxon>Euteleostomi</taxon>
        <taxon>Mammalia</taxon>
        <taxon>Eutheria</taxon>
        <taxon>Euarchontoglires</taxon>
        <taxon>Glires</taxon>
        <taxon>Rodentia</taxon>
        <taxon>Myomorpha</taxon>
        <taxon>Muroidea</taxon>
        <taxon>Muridae</taxon>
        <taxon>Murinae</taxon>
        <taxon>Mus</taxon>
        <taxon>Mus</taxon>
    </lineage>
</organism>
<comment type="function">
    <text evidence="1">May be involved in apoptosis regulation.</text>
</comment>
<evidence type="ECO:0000250" key="1"/>
<evidence type="ECO:0000305" key="2"/>
<name>CC038_MOUSE</name>
<keyword id="KW-0053">Apoptosis</keyword>
<keyword id="KW-1185">Reference proteome</keyword>
<dbReference type="EMBL" id="AK161311">
    <property type="protein sequence ID" value="BAE36315.1"/>
    <property type="molecule type" value="mRNA"/>
</dbReference>
<dbReference type="EMBL" id="CT030641">
    <property type="status" value="NOT_ANNOTATED_CDS"/>
    <property type="molecule type" value="Genomic_DNA"/>
</dbReference>
<dbReference type="EMBL" id="BC020029">
    <property type="protein sequence ID" value="AAH20029.1"/>
    <property type="molecule type" value="mRNA"/>
</dbReference>
<dbReference type="CCDS" id="CCDS28265.1"/>
<dbReference type="RefSeq" id="NP_080549.1">
    <property type="nucleotide sequence ID" value="NM_026273.2"/>
</dbReference>
<dbReference type="FunCoup" id="Q3TTL0">
    <property type="interactions" value="3898"/>
</dbReference>
<dbReference type="IntAct" id="Q3TTL0">
    <property type="interactions" value="1"/>
</dbReference>
<dbReference type="STRING" id="10090.ENSMUSP00000076255"/>
<dbReference type="iPTMnet" id="Q3TTL0"/>
<dbReference type="PhosphoSitePlus" id="Q3TTL0"/>
<dbReference type="jPOST" id="Q3TTL0"/>
<dbReference type="PaxDb" id="10090-ENSMUSP00000076255"/>
<dbReference type="Pumba" id="Q3TTL0"/>
<dbReference type="Antibodypedia" id="32056">
    <property type="antibodies" value="69 antibodies from 15 providers"/>
</dbReference>
<dbReference type="Ensembl" id="ENSMUST00000076991.7">
    <property type="protein sequence ID" value="ENSMUSP00000076255.7"/>
    <property type="gene ID" value="ENSMUSG00000059920.10"/>
</dbReference>
<dbReference type="GeneID" id="67609"/>
<dbReference type="KEGG" id="mmu:67609"/>
<dbReference type="UCSC" id="uc007zqb.1">
    <property type="organism name" value="mouse"/>
</dbReference>
<dbReference type="AGR" id="MGI:1914859"/>
<dbReference type="MGI" id="MGI:1914859">
    <property type="gene designation" value="4930453N24Rik"/>
</dbReference>
<dbReference type="VEuPathDB" id="HostDB:ENSMUSG00000059920"/>
<dbReference type="eggNOG" id="ENOG502RKN5">
    <property type="taxonomic scope" value="Eukaryota"/>
</dbReference>
<dbReference type="GeneTree" id="ENSGT00390000000367"/>
<dbReference type="HOGENOM" id="CLU_060119_0_0_1"/>
<dbReference type="InParanoid" id="Q3TTL0"/>
<dbReference type="OMA" id="AKEYWCE"/>
<dbReference type="OrthoDB" id="6407068at2759"/>
<dbReference type="PhylomeDB" id="Q3TTL0"/>
<dbReference type="TreeFam" id="TF323327"/>
<dbReference type="BioGRID-ORCS" id="67609">
    <property type="hits" value="3 hits in 77 CRISPR screens"/>
</dbReference>
<dbReference type="PRO" id="PR:Q3TTL0"/>
<dbReference type="Proteomes" id="UP000000589">
    <property type="component" value="Chromosome 16"/>
</dbReference>
<dbReference type="RNAct" id="Q3TTL0">
    <property type="molecule type" value="protein"/>
</dbReference>
<dbReference type="Bgee" id="ENSMUSG00000059920">
    <property type="expression patterns" value="Expressed in seminiferous tubule of testis and 253 other cell types or tissues"/>
</dbReference>
<dbReference type="GO" id="GO:0005634">
    <property type="term" value="C:nucleus"/>
    <property type="evidence" value="ECO:0007669"/>
    <property type="project" value="Ensembl"/>
</dbReference>
<dbReference type="GO" id="GO:0006915">
    <property type="term" value="P:apoptotic process"/>
    <property type="evidence" value="ECO:0007669"/>
    <property type="project" value="UniProtKB-KW"/>
</dbReference>
<dbReference type="GO" id="GO:0043065">
    <property type="term" value="P:positive regulation of apoptotic process"/>
    <property type="evidence" value="ECO:0007669"/>
    <property type="project" value="Ensembl"/>
</dbReference>
<dbReference type="InterPro" id="IPR032710">
    <property type="entry name" value="NTF2-like_dom_sf"/>
</dbReference>
<dbReference type="InterPro" id="IPR026698">
    <property type="entry name" value="UPF_C3orf38"/>
</dbReference>
<dbReference type="PANTHER" id="PTHR21084">
    <property type="entry name" value="DENSE INCISORS"/>
    <property type="match status" value="1"/>
</dbReference>
<dbReference type="PANTHER" id="PTHR21084:SF1">
    <property type="entry name" value="DENSE INCISORS"/>
    <property type="match status" value="1"/>
</dbReference>
<dbReference type="Pfam" id="PF15008">
    <property type="entry name" value="DUF4518"/>
    <property type="match status" value="1"/>
</dbReference>
<dbReference type="SUPFAM" id="SSF54427">
    <property type="entry name" value="NTF2-like"/>
    <property type="match status" value="1"/>
</dbReference>
<reference key="1">
    <citation type="journal article" date="2005" name="Science">
        <title>The transcriptional landscape of the mammalian genome.</title>
        <authorList>
            <person name="Carninci P."/>
            <person name="Kasukawa T."/>
            <person name="Katayama S."/>
            <person name="Gough J."/>
            <person name="Frith M.C."/>
            <person name="Maeda N."/>
            <person name="Oyama R."/>
            <person name="Ravasi T."/>
            <person name="Lenhard B."/>
            <person name="Wells C."/>
            <person name="Kodzius R."/>
            <person name="Shimokawa K."/>
            <person name="Bajic V.B."/>
            <person name="Brenner S.E."/>
            <person name="Batalov S."/>
            <person name="Forrest A.R."/>
            <person name="Zavolan M."/>
            <person name="Davis M.J."/>
            <person name="Wilming L.G."/>
            <person name="Aidinis V."/>
            <person name="Allen J.E."/>
            <person name="Ambesi-Impiombato A."/>
            <person name="Apweiler R."/>
            <person name="Aturaliya R.N."/>
            <person name="Bailey T.L."/>
            <person name="Bansal M."/>
            <person name="Baxter L."/>
            <person name="Beisel K.W."/>
            <person name="Bersano T."/>
            <person name="Bono H."/>
            <person name="Chalk A.M."/>
            <person name="Chiu K.P."/>
            <person name="Choudhary V."/>
            <person name="Christoffels A."/>
            <person name="Clutterbuck D.R."/>
            <person name="Crowe M.L."/>
            <person name="Dalla E."/>
            <person name="Dalrymple B.P."/>
            <person name="de Bono B."/>
            <person name="Della Gatta G."/>
            <person name="di Bernardo D."/>
            <person name="Down T."/>
            <person name="Engstrom P."/>
            <person name="Fagiolini M."/>
            <person name="Faulkner G."/>
            <person name="Fletcher C.F."/>
            <person name="Fukushima T."/>
            <person name="Furuno M."/>
            <person name="Futaki S."/>
            <person name="Gariboldi M."/>
            <person name="Georgii-Hemming P."/>
            <person name="Gingeras T.R."/>
            <person name="Gojobori T."/>
            <person name="Green R.E."/>
            <person name="Gustincich S."/>
            <person name="Harbers M."/>
            <person name="Hayashi Y."/>
            <person name="Hensch T.K."/>
            <person name="Hirokawa N."/>
            <person name="Hill D."/>
            <person name="Huminiecki L."/>
            <person name="Iacono M."/>
            <person name="Ikeo K."/>
            <person name="Iwama A."/>
            <person name="Ishikawa T."/>
            <person name="Jakt M."/>
            <person name="Kanapin A."/>
            <person name="Katoh M."/>
            <person name="Kawasawa Y."/>
            <person name="Kelso J."/>
            <person name="Kitamura H."/>
            <person name="Kitano H."/>
            <person name="Kollias G."/>
            <person name="Krishnan S.P."/>
            <person name="Kruger A."/>
            <person name="Kummerfeld S.K."/>
            <person name="Kurochkin I.V."/>
            <person name="Lareau L.F."/>
            <person name="Lazarevic D."/>
            <person name="Lipovich L."/>
            <person name="Liu J."/>
            <person name="Liuni S."/>
            <person name="McWilliam S."/>
            <person name="Madan Babu M."/>
            <person name="Madera M."/>
            <person name="Marchionni L."/>
            <person name="Matsuda H."/>
            <person name="Matsuzawa S."/>
            <person name="Miki H."/>
            <person name="Mignone F."/>
            <person name="Miyake S."/>
            <person name="Morris K."/>
            <person name="Mottagui-Tabar S."/>
            <person name="Mulder N."/>
            <person name="Nakano N."/>
            <person name="Nakauchi H."/>
            <person name="Ng P."/>
            <person name="Nilsson R."/>
            <person name="Nishiguchi S."/>
            <person name="Nishikawa S."/>
            <person name="Nori F."/>
            <person name="Ohara O."/>
            <person name="Okazaki Y."/>
            <person name="Orlando V."/>
            <person name="Pang K.C."/>
            <person name="Pavan W.J."/>
            <person name="Pavesi G."/>
            <person name="Pesole G."/>
            <person name="Petrovsky N."/>
            <person name="Piazza S."/>
            <person name="Reed J."/>
            <person name="Reid J.F."/>
            <person name="Ring B.Z."/>
            <person name="Ringwald M."/>
            <person name="Rost B."/>
            <person name="Ruan Y."/>
            <person name="Salzberg S.L."/>
            <person name="Sandelin A."/>
            <person name="Schneider C."/>
            <person name="Schoenbach C."/>
            <person name="Sekiguchi K."/>
            <person name="Semple C.A."/>
            <person name="Seno S."/>
            <person name="Sessa L."/>
            <person name="Sheng Y."/>
            <person name="Shibata Y."/>
            <person name="Shimada H."/>
            <person name="Shimada K."/>
            <person name="Silva D."/>
            <person name="Sinclair B."/>
            <person name="Sperling S."/>
            <person name="Stupka E."/>
            <person name="Sugiura K."/>
            <person name="Sultana R."/>
            <person name="Takenaka Y."/>
            <person name="Taki K."/>
            <person name="Tammoja K."/>
            <person name="Tan S.L."/>
            <person name="Tang S."/>
            <person name="Taylor M.S."/>
            <person name="Tegner J."/>
            <person name="Teichmann S.A."/>
            <person name="Ueda H.R."/>
            <person name="van Nimwegen E."/>
            <person name="Verardo R."/>
            <person name="Wei C.L."/>
            <person name="Yagi K."/>
            <person name="Yamanishi H."/>
            <person name="Zabarovsky E."/>
            <person name="Zhu S."/>
            <person name="Zimmer A."/>
            <person name="Hide W."/>
            <person name="Bult C."/>
            <person name="Grimmond S.M."/>
            <person name="Teasdale R.D."/>
            <person name="Liu E.T."/>
            <person name="Brusic V."/>
            <person name="Quackenbush J."/>
            <person name="Wahlestedt C."/>
            <person name="Mattick J.S."/>
            <person name="Hume D.A."/>
            <person name="Kai C."/>
            <person name="Sasaki D."/>
            <person name="Tomaru Y."/>
            <person name="Fukuda S."/>
            <person name="Kanamori-Katayama M."/>
            <person name="Suzuki M."/>
            <person name="Aoki J."/>
            <person name="Arakawa T."/>
            <person name="Iida J."/>
            <person name="Imamura K."/>
            <person name="Itoh M."/>
            <person name="Kato T."/>
            <person name="Kawaji H."/>
            <person name="Kawagashira N."/>
            <person name="Kawashima T."/>
            <person name="Kojima M."/>
            <person name="Kondo S."/>
            <person name="Konno H."/>
            <person name="Nakano K."/>
            <person name="Ninomiya N."/>
            <person name="Nishio T."/>
            <person name="Okada M."/>
            <person name="Plessy C."/>
            <person name="Shibata K."/>
            <person name="Shiraki T."/>
            <person name="Suzuki S."/>
            <person name="Tagami M."/>
            <person name="Waki K."/>
            <person name="Watahiki A."/>
            <person name="Okamura-Oho Y."/>
            <person name="Suzuki H."/>
            <person name="Kawai J."/>
            <person name="Hayashizaki Y."/>
        </authorList>
    </citation>
    <scope>NUCLEOTIDE SEQUENCE [LARGE SCALE MRNA]</scope>
    <source>
        <strain>C57BL/6J</strain>
        <tissue>Testis</tissue>
    </source>
</reference>
<reference key="2">
    <citation type="journal article" date="2009" name="PLoS Biol.">
        <title>Lineage-specific biology revealed by a finished genome assembly of the mouse.</title>
        <authorList>
            <person name="Church D.M."/>
            <person name="Goodstadt L."/>
            <person name="Hillier L.W."/>
            <person name="Zody M.C."/>
            <person name="Goldstein S."/>
            <person name="She X."/>
            <person name="Bult C.J."/>
            <person name="Agarwala R."/>
            <person name="Cherry J.L."/>
            <person name="DiCuccio M."/>
            <person name="Hlavina W."/>
            <person name="Kapustin Y."/>
            <person name="Meric P."/>
            <person name="Maglott D."/>
            <person name="Birtle Z."/>
            <person name="Marques A.C."/>
            <person name="Graves T."/>
            <person name="Zhou S."/>
            <person name="Teague B."/>
            <person name="Potamousis K."/>
            <person name="Churas C."/>
            <person name="Place M."/>
            <person name="Herschleb J."/>
            <person name="Runnheim R."/>
            <person name="Forrest D."/>
            <person name="Amos-Landgraf J."/>
            <person name="Schwartz D.C."/>
            <person name="Cheng Z."/>
            <person name="Lindblad-Toh K."/>
            <person name="Eichler E.E."/>
            <person name="Ponting C.P."/>
        </authorList>
    </citation>
    <scope>NUCLEOTIDE SEQUENCE [LARGE SCALE GENOMIC DNA]</scope>
    <source>
        <strain>C57BL/6J</strain>
    </source>
</reference>
<reference key="3">
    <citation type="journal article" date="2004" name="Genome Res.">
        <title>The status, quality, and expansion of the NIH full-length cDNA project: the Mammalian Gene Collection (MGC).</title>
        <authorList>
            <consortium name="The MGC Project Team"/>
        </authorList>
    </citation>
    <scope>NUCLEOTIDE SEQUENCE [LARGE SCALE MRNA]</scope>
    <source>
        <strain>Czech II</strain>
        <tissue>Mammary tumor</tissue>
    </source>
</reference>
<sequence length="348" mass="39532">MSGLSHLESEGCRNLLGLLDNDEIMALCDTVTNRLVQPVDRQDAIHAILVYSQNVEELLRRKKVHREVIFKYLAKQGVVVPPTAEKHNLIQYAKDYWAKQSPKLKDTAEPVTKTEDIQLFKQQAKEDKEAEKVDFRRLGEEFCHWFFELLNSQNPFLGPPQDDWGPQHFWHDAKLRFYYNTSEQNTTDYQGAEIVSLRLLSLVKEEFLFLSPNLDSQGLKCASSPHGLVMVGVAGTVHRGNSCLGIFEQIFGLIRSPFVENTWKIKFINLRIIGGSSLAPESVLKPSVTFEPSDLEAFYNVITLCNSPEVRPNVRQIIDSGTGDQVLHSGDEALLNKREMNLLTPLKH</sequence>
<feature type="chain" id="PRO_0000244990" description="Uncharacterized protein C3orf38 homolog">
    <location>
        <begin position="1"/>
        <end position="348"/>
    </location>
</feature>
<feature type="sequence conflict" description="In Ref. 3; AAH20029." evidence="2" ref="3">
    <location>
        <position position="123"/>
    </location>
</feature>
<feature type="sequence conflict" description="In Ref. 3; AAH20029." evidence="2" ref="3">
    <original>Q</original>
    <variation>P</variation>
    <location>
        <position position="316"/>
    </location>
</feature>
<proteinExistence type="evidence at transcript level"/>